<gene>
    <name type="primary">acrF</name>
    <name type="synonym">envD</name>
    <name type="ordered locus">b3266</name>
    <name type="ordered locus">JW3234</name>
</gene>
<keyword id="KW-0997">Cell inner membrane</keyword>
<keyword id="KW-1003">Cell membrane</keyword>
<keyword id="KW-0472">Membrane</keyword>
<keyword id="KW-1185">Reference proteome</keyword>
<keyword id="KW-0812">Transmembrane</keyword>
<keyword id="KW-1133">Transmembrane helix</keyword>
<keyword id="KW-0813">Transport</keyword>
<organism>
    <name type="scientific">Escherichia coli (strain K12)</name>
    <dbReference type="NCBI Taxonomy" id="83333"/>
    <lineage>
        <taxon>Bacteria</taxon>
        <taxon>Pseudomonadati</taxon>
        <taxon>Pseudomonadota</taxon>
        <taxon>Gammaproteobacteria</taxon>
        <taxon>Enterobacterales</taxon>
        <taxon>Enterobacteriaceae</taxon>
        <taxon>Escherichia</taxon>
    </lineage>
</organism>
<accession>P24181</accession>
<accession>Q2M8U9</accession>
<sequence length="1034" mass="111454">MANFFIRRPIFAWVLAIILMMAGALAILQLPVAQYPTIAPPAVSVSANYPGADAQTVQDTVTQVIEQNMNGIDNLMYMSSTSDSAGSVTITLTFQSGTDPDIAQVQVQNKLQLATPLLPQEVQQQGISVEKSSSSYLMVAGFVSDNPGTTQDDISDYVASNVKDTLSRLNGVGDVQLFGAQYAMRIWLDADLLNKYKLTPVDVINQLKVQNDQIAAGQLGGTPALPGQQLNASIIAQTRFKNPEEFGKVTLRVNSDGSVVRLKDVARVELGGENYNVIARINGKPAAGLGIKLATGANALDTAKAIKAKLAELQPFFPQGMKVLYPYDTTPFVQLSIHEVVKTLFEAIMLVFLVMYLFLQNMRATLIPTIAVPVVLLGTFAILAAFGYSINTLTMFGMVLAIGLLVDDAIVVVENVERVMMEDKLPPKEATEKSMSQIQGALVGIAMVLSAVFIPMAFFGGSTGAIYRQFSITIVSAMALSVLVALILTPALCATLLKPVSAEHHENKGGFFGWFNTTFDHSVNHYTNSVGKILGSTGRYLLIYALIVAGMVVLFLRLPSSFLPEEDQGVFLTMIQLPAGATQERTQKVLDQVTDYYLKNEKANVESVFTVNGFSFSGQAQNAGMAFVSLKPWEERNGDENSAEAVIHRAKMELGKIRDGFVIPFNMPAIVELGTATGFDFELIDQAGLGHDALTQARNQLLGMAAQHPASLVSVRPNGLEDTAQFKLEVDQEKAQALGVSLSDINQTISTALGGTYVNDFIDRGRVKKLYVQADAKFRMLPEDVDKLYVRSANGEMVPFSAFTTSHWVYGSPRLERYNGLPSMEIQGEAAPGTSSGDAMALMENLASKLPAGIGYDWTGMSYQERLSGNQAPALVAISFVVVFLCLAALYESWSIPVSVMLVVPLGIVGVLLAATLFNQKNDVYFMVGLLTTIGLSAKNAILIVEFAKDLMEKEGKGVVEATLMAVRMRLRPILMTSLAFILGVLPLAISNGAGSGAQNAVGIGVMGGMVSATLLAIFFVPVFFVVIRRCFKG</sequence>
<dbReference type="EMBL" id="M96848">
    <property type="protein sequence ID" value="AAA02932.1"/>
    <property type="molecule type" value="Unassigned_DNA"/>
</dbReference>
<dbReference type="EMBL" id="X57948">
    <property type="protein sequence ID" value="CAA41017.1"/>
    <property type="molecule type" value="Genomic_DNA"/>
</dbReference>
<dbReference type="EMBL" id="U18997">
    <property type="protein sequence ID" value="AAA58070.1"/>
    <property type="molecule type" value="Genomic_DNA"/>
</dbReference>
<dbReference type="EMBL" id="U00096">
    <property type="protein sequence ID" value="AAC76298.1"/>
    <property type="molecule type" value="Genomic_DNA"/>
</dbReference>
<dbReference type="EMBL" id="AP009048">
    <property type="protein sequence ID" value="BAE77307.1"/>
    <property type="molecule type" value="Genomic_DNA"/>
</dbReference>
<dbReference type="PIR" id="D65119">
    <property type="entry name" value="D65119"/>
</dbReference>
<dbReference type="RefSeq" id="NP_417732.1">
    <property type="nucleotide sequence ID" value="NC_000913.3"/>
</dbReference>
<dbReference type="RefSeq" id="WP_001273238.1">
    <property type="nucleotide sequence ID" value="NZ_SSZK01000072.1"/>
</dbReference>
<dbReference type="SMR" id="P24181"/>
<dbReference type="BioGRID" id="4262457">
    <property type="interactions" value="311"/>
</dbReference>
<dbReference type="ComplexPortal" id="CPX-4265">
    <property type="entry name" value="AcrEF-TolC multidrug efflux transport complex"/>
</dbReference>
<dbReference type="DIP" id="DIP-9052N"/>
<dbReference type="FunCoup" id="P24181">
    <property type="interactions" value="730"/>
</dbReference>
<dbReference type="IntAct" id="P24181">
    <property type="interactions" value="2"/>
</dbReference>
<dbReference type="STRING" id="511145.b3266"/>
<dbReference type="CARD" id="ARO:3000502">
    <property type="molecule name" value="AcrF"/>
    <property type="mechanism identifier" value="ARO:0010000"/>
    <property type="mechanism name" value="antibiotic efflux"/>
</dbReference>
<dbReference type="TCDB" id="2.A.6.2.1">
    <property type="family name" value="the resistance-nodulation-cell division (rnd) superfamily"/>
</dbReference>
<dbReference type="jPOST" id="P24181"/>
<dbReference type="PaxDb" id="511145-b3266"/>
<dbReference type="EnsemblBacteria" id="AAC76298">
    <property type="protein sequence ID" value="AAC76298"/>
    <property type="gene ID" value="b3266"/>
</dbReference>
<dbReference type="GeneID" id="947768"/>
<dbReference type="KEGG" id="ecj:JW3234"/>
<dbReference type="KEGG" id="eco:b3266"/>
<dbReference type="KEGG" id="ecoc:C3026_17765"/>
<dbReference type="PATRIC" id="fig|1411691.4.peg.3462"/>
<dbReference type="EchoBASE" id="EB0263"/>
<dbReference type="eggNOG" id="COG0841">
    <property type="taxonomic scope" value="Bacteria"/>
</dbReference>
<dbReference type="HOGENOM" id="CLU_002755_1_1_6"/>
<dbReference type="InParanoid" id="P24181"/>
<dbReference type="OMA" id="WFNARFD"/>
<dbReference type="OrthoDB" id="9757904at2"/>
<dbReference type="PhylomeDB" id="P24181"/>
<dbReference type="BioCyc" id="EcoCyc:ACRF-MONOMER"/>
<dbReference type="BioCyc" id="MetaCyc:ACRF-MONOMER"/>
<dbReference type="PRO" id="PR:P24181"/>
<dbReference type="Proteomes" id="UP000000625">
    <property type="component" value="Chromosome"/>
</dbReference>
<dbReference type="GO" id="GO:1990281">
    <property type="term" value="C:efflux pump complex"/>
    <property type="evidence" value="ECO:0000303"/>
    <property type="project" value="ComplexPortal"/>
</dbReference>
<dbReference type="GO" id="GO:0098567">
    <property type="term" value="C:periplasmic side of plasma membrane"/>
    <property type="evidence" value="ECO:0000303"/>
    <property type="project" value="ComplexPortal"/>
</dbReference>
<dbReference type="GO" id="GO:0005886">
    <property type="term" value="C:plasma membrane"/>
    <property type="evidence" value="ECO:0000318"/>
    <property type="project" value="GO_Central"/>
</dbReference>
<dbReference type="GO" id="GO:0015562">
    <property type="term" value="F:efflux transmembrane transporter activity"/>
    <property type="evidence" value="ECO:0007669"/>
    <property type="project" value="InterPro"/>
</dbReference>
<dbReference type="GO" id="GO:0042910">
    <property type="term" value="F:xenobiotic transmembrane transporter activity"/>
    <property type="evidence" value="ECO:0000318"/>
    <property type="project" value="GO_Central"/>
</dbReference>
<dbReference type="GO" id="GO:0140330">
    <property type="term" value="P:xenobiotic detoxification by transmembrane export across the cell outer membrane"/>
    <property type="evidence" value="ECO:0000269"/>
    <property type="project" value="ComplexPortal"/>
</dbReference>
<dbReference type="FunFam" id="1.20.1640.10:FF:000001">
    <property type="entry name" value="Efflux pump membrane transporter"/>
    <property type="match status" value="1"/>
</dbReference>
<dbReference type="FunFam" id="1.20.1640.10:FF:000002">
    <property type="entry name" value="Efflux pump membrane transporter"/>
    <property type="match status" value="1"/>
</dbReference>
<dbReference type="FunFam" id="3.30.2090.10:FF:000001">
    <property type="entry name" value="Efflux pump membrane transporter"/>
    <property type="match status" value="1"/>
</dbReference>
<dbReference type="FunFam" id="3.30.2090.10:FF:000002">
    <property type="entry name" value="Efflux pump membrane transporter"/>
    <property type="match status" value="1"/>
</dbReference>
<dbReference type="FunFam" id="3.30.70.1430:FF:000001">
    <property type="entry name" value="Efflux pump membrane transporter"/>
    <property type="match status" value="1"/>
</dbReference>
<dbReference type="FunFam" id="3.30.70.1430:FF:000002">
    <property type="entry name" value="Efflux pump membrane transporter"/>
    <property type="match status" value="1"/>
</dbReference>
<dbReference type="Gene3D" id="3.30.70.1430">
    <property type="entry name" value="Multidrug efflux transporter AcrB pore domain"/>
    <property type="match status" value="2"/>
</dbReference>
<dbReference type="Gene3D" id="3.30.70.1440">
    <property type="entry name" value="Multidrug efflux transporter AcrB pore domain"/>
    <property type="match status" value="1"/>
</dbReference>
<dbReference type="Gene3D" id="3.30.70.1320">
    <property type="entry name" value="Multidrug efflux transporter AcrB pore domain like"/>
    <property type="match status" value="1"/>
</dbReference>
<dbReference type="Gene3D" id="3.30.2090.10">
    <property type="entry name" value="Multidrug efflux transporter AcrB TolC docking domain, DN and DC subdomains"/>
    <property type="match status" value="2"/>
</dbReference>
<dbReference type="Gene3D" id="1.20.1640.10">
    <property type="entry name" value="Multidrug efflux transporter AcrB transmembrane domain"/>
    <property type="match status" value="2"/>
</dbReference>
<dbReference type="InterPro" id="IPR027463">
    <property type="entry name" value="AcrB_DN_DC_subdom"/>
</dbReference>
<dbReference type="InterPro" id="IPR001036">
    <property type="entry name" value="Acrflvin-R"/>
</dbReference>
<dbReference type="InterPro" id="IPR004764">
    <property type="entry name" value="MdtF-like"/>
</dbReference>
<dbReference type="NCBIfam" id="TIGR00915">
    <property type="entry name" value="2A0602"/>
    <property type="match status" value="1"/>
</dbReference>
<dbReference type="NCBIfam" id="NF000282">
    <property type="entry name" value="RND_permease_1"/>
    <property type="match status" value="1"/>
</dbReference>
<dbReference type="PANTHER" id="PTHR32063">
    <property type="match status" value="1"/>
</dbReference>
<dbReference type="PANTHER" id="PTHR32063:SF72">
    <property type="entry name" value="MULTIDRUG EXPORT PROTEIN ACRF"/>
    <property type="match status" value="1"/>
</dbReference>
<dbReference type="Pfam" id="PF00873">
    <property type="entry name" value="ACR_tran"/>
    <property type="match status" value="1"/>
</dbReference>
<dbReference type="PRINTS" id="PR00702">
    <property type="entry name" value="ACRIFLAVINRP"/>
</dbReference>
<dbReference type="SUPFAM" id="SSF82693">
    <property type="entry name" value="Multidrug efflux transporter AcrB pore domain, PN1, PN2, PC1 and PC2 subdomains"/>
    <property type="match status" value="3"/>
</dbReference>
<dbReference type="SUPFAM" id="SSF82714">
    <property type="entry name" value="Multidrug efflux transporter AcrB TolC docking domain, DN and DC subdomains"/>
    <property type="match status" value="2"/>
</dbReference>
<dbReference type="SUPFAM" id="SSF82866">
    <property type="entry name" value="Multidrug efflux transporter AcrB transmembrane domain"/>
    <property type="match status" value="2"/>
</dbReference>
<proteinExistence type="evidence at protein level"/>
<protein>
    <recommendedName>
        <fullName>Multidrug export protein AcrF</fullName>
    </recommendedName>
    <alternativeName>
        <fullName>Acriflavine resistance protein F</fullName>
    </alternativeName>
    <alternativeName>
        <fullName>Protein EnvD</fullName>
    </alternativeName>
</protein>
<feature type="chain" id="PRO_0000161813" description="Multidrug export protein AcrF">
    <location>
        <begin position="1"/>
        <end position="1034"/>
    </location>
</feature>
<feature type="topological domain" description="Cytoplasmic" evidence="1">
    <location>
        <begin position="1"/>
        <end position="9"/>
    </location>
</feature>
<feature type="transmembrane region" description="Helical; Name=1" evidence="1">
    <location>
        <begin position="10"/>
        <end position="28"/>
    </location>
</feature>
<feature type="topological domain" description="Periplasmic" evidence="1">
    <location>
        <begin position="29"/>
        <end position="339"/>
    </location>
</feature>
<feature type="transmembrane region" description="Helical; Name=2" evidence="1">
    <location>
        <begin position="340"/>
        <end position="359"/>
    </location>
</feature>
<feature type="topological domain" description="Cytoplasmic" evidence="1">
    <location>
        <begin position="360"/>
        <end position="365"/>
    </location>
</feature>
<feature type="transmembrane region" description="Helical; Name=3" evidence="1">
    <location>
        <begin position="366"/>
        <end position="385"/>
    </location>
</feature>
<feature type="topological domain" description="Periplasmic" evidence="1">
    <location>
        <begin position="386"/>
        <end position="391"/>
    </location>
</feature>
<feature type="transmembrane region" description="Helical; Name=4" evidence="1">
    <location>
        <begin position="392"/>
        <end position="413"/>
    </location>
</feature>
<feature type="topological domain" description="Cytoplasmic" evidence="1">
    <location>
        <begin position="414"/>
        <end position="441"/>
    </location>
</feature>
<feature type="transmembrane region" description="Helical; Name=5" evidence="1">
    <location>
        <begin position="442"/>
        <end position="460"/>
    </location>
</feature>
<feature type="topological domain" description="Periplasmic" evidence="1">
    <location>
        <begin position="461"/>
        <end position="473"/>
    </location>
</feature>
<feature type="transmembrane region" description="Helical; Name=6" evidence="1">
    <location>
        <begin position="474"/>
        <end position="496"/>
    </location>
</feature>
<feature type="topological domain" description="Cytoplasmic" evidence="1">
    <location>
        <begin position="497"/>
        <end position="537"/>
    </location>
</feature>
<feature type="transmembrane region" description="Helical; Name=7" evidence="1">
    <location>
        <begin position="538"/>
        <end position="556"/>
    </location>
</feature>
<feature type="topological domain" description="Periplasmic" evidence="1">
    <location>
        <begin position="557"/>
        <end position="871"/>
    </location>
</feature>
<feature type="transmembrane region" description="Helical; Name=8" evidence="1">
    <location>
        <begin position="872"/>
        <end position="891"/>
    </location>
</feature>
<feature type="topological domain" description="Cytoplasmic" evidence="1">
    <location>
        <begin position="892"/>
        <end position="897"/>
    </location>
</feature>
<feature type="transmembrane region" description="Helical; Name=9" evidence="1">
    <location>
        <begin position="898"/>
        <end position="917"/>
    </location>
</feature>
<feature type="topological domain" description="Periplasmic" evidence="1">
    <location>
        <begin position="918"/>
        <end position="923"/>
    </location>
</feature>
<feature type="transmembrane region" description="Helical; Name=10" evidence="1">
    <location>
        <begin position="924"/>
        <end position="945"/>
    </location>
</feature>
<feature type="topological domain" description="Cytoplasmic" evidence="1">
    <location>
        <begin position="946"/>
        <end position="973"/>
    </location>
</feature>
<feature type="transmembrane region" description="Helical; Name=11" evidence="1">
    <location>
        <begin position="974"/>
        <end position="992"/>
    </location>
</feature>
<feature type="topological domain" description="Periplasmic" evidence="1">
    <location>
        <begin position="993"/>
        <end position="1005"/>
    </location>
</feature>
<feature type="transmembrane region" description="Helical; Name=12" evidence="1">
    <location>
        <begin position="1006"/>
        <end position="1028"/>
    </location>
</feature>
<feature type="topological domain" description="Cytoplasmic" evidence="1">
    <location>
        <begin position="1029"/>
        <end position="1034"/>
    </location>
</feature>
<comment type="function">
    <text evidence="2 3">Part of the tripartite efflux system AcrEF-TolC. Involved in the efflux of indole and organic solvents.</text>
</comment>
<comment type="subunit">
    <text evidence="7">Part of the tripartite efflux system AcrEF-TolC, which is composed of an inner membrane transporter, AcrF, a periplasmic membrane fusion protein, AcrE, and an outer membrane component, TolC. The complex forms a large protein conduit and can translocate molecules across both the inner and outer membranes (Probable).</text>
</comment>
<comment type="subcellular location">
    <subcellularLocation>
        <location evidence="3 4">Cell inner membrane</location>
        <topology evidence="3 4">Multi-pass membrane protein</topology>
    </subcellularLocation>
</comment>
<comment type="induction">
    <text evidence="5">Induced by LeuO, part of the acrEF operon.</text>
</comment>
<comment type="similarity">
    <text evidence="6">Belongs to the resistance-nodulation-cell division (RND) (TC 2.A.6) family.</text>
</comment>
<evidence type="ECO:0000250" key="1"/>
<evidence type="ECO:0000269" key="2">
    <source>
    </source>
</evidence>
<evidence type="ECO:0000269" key="3">
    <source>
    </source>
</evidence>
<evidence type="ECO:0000269" key="4">
    <source>
    </source>
</evidence>
<evidence type="ECO:0000269" key="5">
    <source>
    </source>
</evidence>
<evidence type="ECO:0000305" key="6"/>
<evidence type="ECO:0000305" key="7">
    <source>
    </source>
</evidence>
<name>ACRF_ECOLI</name>
<reference key="1">
    <citation type="submission" date="1993-05" db="EMBL/GenBank/DDBJ databases">
        <title>Nucleotide sequence of the acrEF operon from Escherichia coli.</title>
        <authorList>
            <person name="Xu J."/>
            <person name="Nilles M.L."/>
            <person name="Bertrand K.P."/>
        </authorList>
    </citation>
    <scope>NUCLEOTIDE SEQUENCE [GENOMIC DNA]</scope>
    <source>
        <strain>K12</strain>
    </source>
</reference>
<reference key="2">
    <citation type="journal article" date="1991" name="Mol. Gen. Genet.">
        <title>Molecular analysis and nucleotide sequence of the envCD operon of Escherichia coli.</title>
        <authorList>
            <person name="Klein J.R."/>
            <person name="Henrich B."/>
            <person name="Plapp R."/>
        </authorList>
    </citation>
    <scope>PRELIMINARY NUCLEOTIDE SEQUENCE [GENOMIC DNA]</scope>
    <source>
        <strain>K12</strain>
    </source>
</reference>
<reference key="3">
    <citation type="journal article" date="1993" name="J. Bacteriol.">
        <title>Molecular cloning and characterization of acrA and acrE genes of Escherichia coli.</title>
        <authorList>
            <person name="Ma D."/>
            <person name="Cook D.N."/>
            <person name="Alberti M."/>
            <person name="Pon N.G."/>
            <person name="Nikaido H."/>
            <person name="Hearst J.E."/>
        </authorList>
    </citation>
    <scope>SEQUENCE REVISION</scope>
</reference>
<reference key="4">
    <citation type="journal article" date="1997" name="Science">
        <title>The complete genome sequence of Escherichia coli K-12.</title>
        <authorList>
            <person name="Blattner F.R."/>
            <person name="Plunkett G. III"/>
            <person name="Bloch C.A."/>
            <person name="Perna N.T."/>
            <person name="Burland V."/>
            <person name="Riley M."/>
            <person name="Collado-Vides J."/>
            <person name="Glasner J.D."/>
            <person name="Rode C.K."/>
            <person name="Mayhew G.F."/>
            <person name="Gregor J."/>
            <person name="Davis N.W."/>
            <person name="Kirkpatrick H.A."/>
            <person name="Goeden M.A."/>
            <person name="Rose D.J."/>
            <person name="Mau B."/>
            <person name="Shao Y."/>
        </authorList>
    </citation>
    <scope>NUCLEOTIDE SEQUENCE [LARGE SCALE GENOMIC DNA]</scope>
    <source>
        <strain>K12 / MG1655 / ATCC 47076</strain>
    </source>
</reference>
<reference key="5">
    <citation type="journal article" date="2006" name="Mol. Syst. Biol.">
        <title>Highly accurate genome sequences of Escherichia coli K-12 strains MG1655 and W3110.</title>
        <authorList>
            <person name="Hayashi K."/>
            <person name="Morooka N."/>
            <person name="Yamamoto Y."/>
            <person name="Fujita K."/>
            <person name="Isono K."/>
            <person name="Choi S."/>
            <person name="Ohtsubo E."/>
            <person name="Baba T."/>
            <person name="Wanner B.L."/>
            <person name="Mori H."/>
            <person name="Horiuchi T."/>
        </authorList>
    </citation>
    <scope>NUCLEOTIDE SEQUENCE [LARGE SCALE GENOMIC DNA]</scope>
    <source>
        <strain>K12 / W3110 / ATCC 27325 / DSM 5911</strain>
    </source>
</reference>
<reference key="6">
    <citation type="journal article" date="1999" name="FEMS Microbiol. Lett.">
        <title>Role of multiple efflux pumps in Escherichia coli in indole expulsion.</title>
        <authorList>
            <person name="Kawamura-Sato K."/>
            <person name="Shibayama K."/>
            <person name="Horii T."/>
            <person name="Iimuma Y."/>
            <person name="Arakawa Y."/>
            <person name="Ohta M."/>
        </authorList>
    </citation>
    <scope>FUNCTION</scope>
    <source>
        <strain>K12</strain>
    </source>
</reference>
<reference key="7">
    <citation type="journal article" date="2001" name="J. Bacteriol.">
        <title>Suppression of hypersensitivity of Escherichia coli acrB mutant to organic solvents by integrational activation of the acrEF operon with the IS1 or IS2 element.</title>
        <authorList>
            <person name="Kobayashi K."/>
            <person name="Tsukagoshi N."/>
            <person name="Aono R."/>
        </authorList>
    </citation>
    <scope>FUNCTION</scope>
    <scope>SUBUNIT</scope>
    <scope>SUBCELLULAR LOCATION</scope>
</reference>
<reference key="8">
    <citation type="journal article" date="2005" name="Science">
        <title>Global topology analysis of the Escherichia coli inner membrane proteome.</title>
        <authorList>
            <person name="Daley D.O."/>
            <person name="Rapp M."/>
            <person name="Granseth E."/>
            <person name="Melen K."/>
            <person name="Drew D."/>
            <person name="von Heijne G."/>
        </authorList>
    </citation>
    <scope>SUBCELLULAR LOCATION</scope>
    <source>
        <strain>K12 / MG1655 / ATCC 47076</strain>
    </source>
</reference>
<reference key="9">
    <citation type="journal article" date="2009" name="J. Bacteriol.">
        <title>Involvement of the leucine response transcription factor LeuO in regulation of the genes for sulfa drug efflux.</title>
        <authorList>
            <person name="Shimada T."/>
            <person name="Yamamoto K."/>
            <person name="Ishihama A."/>
        </authorList>
    </citation>
    <scope>OPERON STRUCTURE</scope>
    <scope>INDUCTION</scope>
    <source>
        <strain>K12 / BW25113</strain>
    </source>
</reference>